<evidence type="ECO:0000255" key="1">
    <source>
        <dbReference type="HAMAP-Rule" id="MF_01364"/>
    </source>
</evidence>
<evidence type="ECO:0000305" key="2"/>
<accession>B9E9K4</accession>
<comment type="function">
    <text evidence="1">Binds 16S rRNA, required for the assembly of 30S particles and may also be responsible for determining the conformation of the 16S rRNA at the A site.</text>
</comment>
<comment type="cofactor">
    <cofactor evidence="1">
        <name>Zn(2+)</name>
        <dbReference type="ChEBI" id="CHEBI:29105"/>
    </cofactor>
    <text evidence="1">Binds 1 zinc ion per subunit.</text>
</comment>
<comment type="subunit">
    <text evidence="1">Part of the 30S ribosomal subunit. Contacts proteins S3 and S10.</text>
</comment>
<comment type="similarity">
    <text evidence="1">Belongs to the universal ribosomal protein uS14 family. Zinc-binding uS14 subfamily.</text>
</comment>
<keyword id="KW-0479">Metal-binding</keyword>
<keyword id="KW-1185">Reference proteome</keyword>
<keyword id="KW-0687">Ribonucleoprotein</keyword>
<keyword id="KW-0689">Ribosomal protein</keyword>
<keyword id="KW-0694">RNA-binding</keyword>
<keyword id="KW-0699">rRNA-binding</keyword>
<keyword id="KW-0862">Zinc</keyword>
<dbReference type="EMBL" id="AP009484">
    <property type="protein sequence ID" value="BAH16915.1"/>
    <property type="molecule type" value="Genomic_DNA"/>
</dbReference>
<dbReference type="RefSeq" id="WP_008356542.1">
    <property type="nucleotide sequence ID" value="NZ_CAXHTI010000005.1"/>
</dbReference>
<dbReference type="SMR" id="B9E9K4"/>
<dbReference type="STRING" id="458233.MCCL_0208"/>
<dbReference type="GeneID" id="66361746"/>
<dbReference type="KEGG" id="mcl:MCCL_0208"/>
<dbReference type="eggNOG" id="COG0199">
    <property type="taxonomic scope" value="Bacteria"/>
</dbReference>
<dbReference type="HOGENOM" id="CLU_139869_3_0_9"/>
<dbReference type="OrthoDB" id="9810484at2"/>
<dbReference type="Proteomes" id="UP000001383">
    <property type="component" value="Chromosome"/>
</dbReference>
<dbReference type="GO" id="GO:0015935">
    <property type="term" value="C:small ribosomal subunit"/>
    <property type="evidence" value="ECO:0007669"/>
    <property type="project" value="TreeGrafter"/>
</dbReference>
<dbReference type="GO" id="GO:0019843">
    <property type="term" value="F:rRNA binding"/>
    <property type="evidence" value="ECO:0007669"/>
    <property type="project" value="UniProtKB-UniRule"/>
</dbReference>
<dbReference type="GO" id="GO:0003735">
    <property type="term" value="F:structural constituent of ribosome"/>
    <property type="evidence" value="ECO:0007669"/>
    <property type="project" value="InterPro"/>
</dbReference>
<dbReference type="GO" id="GO:0008270">
    <property type="term" value="F:zinc ion binding"/>
    <property type="evidence" value="ECO:0007669"/>
    <property type="project" value="UniProtKB-UniRule"/>
</dbReference>
<dbReference type="GO" id="GO:0006412">
    <property type="term" value="P:translation"/>
    <property type="evidence" value="ECO:0007669"/>
    <property type="project" value="UniProtKB-UniRule"/>
</dbReference>
<dbReference type="FunFam" id="4.10.830.10:FF:000001">
    <property type="entry name" value="30S ribosomal protein S14 type Z"/>
    <property type="match status" value="1"/>
</dbReference>
<dbReference type="Gene3D" id="4.10.830.10">
    <property type="entry name" value="30s Ribosomal Protein S14, Chain N"/>
    <property type="match status" value="1"/>
</dbReference>
<dbReference type="HAMAP" id="MF_01364_B">
    <property type="entry name" value="Ribosomal_uS14_2_B"/>
    <property type="match status" value="1"/>
</dbReference>
<dbReference type="InterPro" id="IPR001209">
    <property type="entry name" value="Ribosomal_uS14"/>
</dbReference>
<dbReference type="InterPro" id="IPR023053">
    <property type="entry name" value="Ribosomal_uS14_bact"/>
</dbReference>
<dbReference type="InterPro" id="IPR018271">
    <property type="entry name" value="Ribosomal_uS14_CS"/>
</dbReference>
<dbReference type="InterPro" id="IPR043140">
    <property type="entry name" value="Ribosomal_uS14_sf"/>
</dbReference>
<dbReference type="NCBIfam" id="NF005974">
    <property type="entry name" value="PRK08061.1"/>
    <property type="match status" value="1"/>
</dbReference>
<dbReference type="PANTHER" id="PTHR19836">
    <property type="entry name" value="30S RIBOSOMAL PROTEIN S14"/>
    <property type="match status" value="1"/>
</dbReference>
<dbReference type="PANTHER" id="PTHR19836:SF26">
    <property type="entry name" value="SMALL RIBOSOMAL SUBUNIT PROTEIN US14B"/>
    <property type="match status" value="1"/>
</dbReference>
<dbReference type="Pfam" id="PF00253">
    <property type="entry name" value="Ribosomal_S14"/>
    <property type="match status" value="1"/>
</dbReference>
<dbReference type="SUPFAM" id="SSF57716">
    <property type="entry name" value="Glucocorticoid receptor-like (DNA-binding domain)"/>
    <property type="match status" value="1"/>
</dbReference>
<dbReference type="PROSITE" id="PS00527">
    <property type="entry name" value="RIBOSOMAL_S14"/>
    <property type="match status" value="1"/>
</dbReference>
<reference key="1">
    <citation type="journal article" date="2009" name="J. Bacteriol.">
        <title>Complete genome sequence of Macrococcus caseolyticus strain JCSCS5402, reflecting the ancestral genome of the human-pathogenic staphylococci.</title>
        <authorList>
            <person name="Baba T."/>
            <person name="Kuwahara-Arai K."/>
            <person name="Uchiyama I."/>
            <person name="Takeuchi F."/>
            <person name="Ito T."/>
            <person name="Hiramatsu K."/>
        </authorList>
    </citation>
    <scope>NUCLEOTIDE SEQUENCE [LARGE SCALE GENOMIC DNA]</scope>
    <source>
        <strain>JCSC5402</strain>
    </source>
</reference>
<feature type="chain" id="PRO_1000166773" description="Small ribosomal subunit protein uS14">
    <location>
        <begin position="1"/>
        <end position="61"/>
    </location>
</feature>
<feature type="binding site" evidence="1">
    <location>
        <position position="24"/>
    </location>
    <ligand>
        <name>Zn(2+)</name>
        <dbReference type="ChEBI" id="CHEBI:29105"/>
    </ligand>
</feature>
<feature type="binding site" evidence="1">
    <location>
        <position position="27"/>
    </location>
    <ligand>
        <name>Zn(2+)</name>
        <dbReference type="ChEBI" id="CHEBI:29105"/>
    </ligand>
</feature>
<feature type="binding site" evidence="1">
    <location>
        <position position="40"/>
    </location>
    <ligand>
        <name>Zn(2+)</name>
        <dbReference type="ChEBI" id="CHEBI:29105"/>
    </ligand>
</feature>
<feature type="binding site" evidence="1">
    <location>
        <position position="43"/>
    </location>
    <ligand>
        <name>Zn(2+)</name>
        <dbReference type="ChEBI" id="CHEBI:29105"/>
    </ligand>
</feature>
<organism>
    <name type="scientific">Macrococcus caseolyticus (strain JCSC5402)</name>
    <name type="common">Macrococcoides caseolyticum</name>
    <dbReference type="NCBI Taxonomy" id="458233"/>
    <lineage>
        <taxon>Bacteria</taxon>
        <taxon>Bacillati</taxon>
        <taxon>Bacillota</taxon>
        <taxon>Bacilli</taxon>
        <taxon>Bacillales</taxon>
        <taxon>Staphylococcaceae</taxon>
        <taxon>Macrococcoides</taxon>
    </lineage>
</organism>
<name>RS14Z_MACCJ</name>
<gene>
    <name evidence="1" type="primary">rpsZ</name>
    <name evidence="1" type="synonym">rpsN</name>
    <name type="ordered locus">MCCL_0208</name>
</gene>
<protein>
    <recommendedName>
        <fullName evidence="1">Small ribosomal subunit protein uS14</fullName>
    </recommendedName>
    <alternativeName>
        <fullName evidence="2">30S ribosomal protein S14 type Z</fullName>
    </alternativeName>
</protein>
<proteinExistence type="inferred from homology"/>
<sequence>MAKKSMIAKQQRKQKFKVQEYTRCERCGRPHSVIRKFKLCRICFRELAYKGQIPGVKKASW</sequence>